<reference key="1">
    <citation type="journal article" date="1997" name="Nature">
        <title>The complete genome sequence of the hyperthermophilic, sulphate-reducing archaeon Archaeoglobus fulgidus.</title>
        <authorList>
            <person name="Klenk H.-P."/>
            <person name="Clayton R.A."/>
            <person name="Tomb J.-F."/>
            <person name="White O."/>
            <person name="Nelson K.E."/>
            <person name="Ketchum K.A."/>
            <person name="Dodson R.J."/>
            <person name="Gwinn M.L."/>
            <person name="Hickey E.K."/>
            <person name="Peterson J.D."/>
            <person name="Richardson D.L."/>
            <person name="Kerlavage A.R."/>
            <person name="Graham D.E."/>
            <person name="Kyrpides N.C."/>
            <person name="Fleischmann R.D."/>
            <person name="Quackenbush J."/>
            <person name="Lee N.H."/>
            <person name="Sutton G.G."/>
            <person name="Gill S.R."/>
            <person name="Kirkness E.F."/>
            <person name="Dougherty B.A."/>
            <person name="McKenney K."/>
            <person name="Adams M.D."/>
            <person name="Loftus B.J."/>
            <person name="Peterson S.N."/>
            <person name="Reich C.I."/>
            <person name="McNeil L.K."/>
            <person name="Badger J.H."/>
            <person name="Glodek A."/>
            <person name="Zhou L."/>
            <person name="Overbeek R."/>
            <person name="Gocayne J.D."/>
            <person name="Weidman J.F."/>
            <person name="McDonald L.A."/>
            <person name="Utterback T.R."/>
            <person name="Cotton M.D."/>
            <person name="Spriggs T."/>
            <person name="Artiach P."/>
            <person name="Kaine B.P."/>
            <person name="Sykes S.M."/>
            <person name="Sadow P.W."/>
            <person name="D'Andrea K.P."/>
            <person name="Bowman C."/>
            <person name="Fujii C."/>
            <person name="Garland S.A."/>
            <person name="Mason T.M."/>
            <person name="Olsen G.J."/>
            <person name="Fraser C.M."/>
            <person name="Smith H.O."/>
            <person name="Woese C.R."/>
            <person name="Venter J.C."/>
        </authorList>
    </citation>
    <scope>NUCLEOTIDE SEQUENCE [LARGE SCALE GENOMIC DNA]</scope>
    <source>
        <strain>ATCC 49558 / DSM 4304 / JCM 9628 / NBRC 100126 / VC-16</strain>
    </source>
</reference>
<reference key="2">
    <citation type="journal article" date="2007" name="J. Struct. Funct. Genomics">
        <title>Functional insights from structural genomics.</title>
        <authorList>
            <person name="Forouhar F."/>
            <person name="Kuzin A."/>
            <person name="Seetharaman J."/>
            <person name="Lee I."/>
            <person name="Zhou W."/>
            <person name="Abashidze M."/>
            <person name="Chen Y."/>
            <person name="Yong W."/>
            <person name="Janjua H."/>
            <person name="Fang Y."/>
            <person name="Wang D."/>
            <person name="Cunningham K."/>
            <person name="Xiao R."/>
            <person name="Acton T.B."/>
            <person name="Pichersky E."/>
            <person name="Klessig D.F."/>
            <person name="Porter C.W."/>
            <person name="Montelione G.T."/>
            <person name="Tong L."/>
        </authorList>
    </citation>
    <scope>X-RAY CRYSTALLOGRAPHY (2.2 ANGSTROMS) IN COMPLEX WITH S-ADENOSYL-L-METHIONINE</scope>
    <scope>SUBUNIT</scope>
    <source>
        <strain>ATCC 49558 / DSM 4304 / JCM 9628 / NBRC 100126 / VC-16</strain>
    </source>
</reference>
<name>Y241_ARCFU</name>
<feature type="chain" id="PRO_0000155620" description="S-adenosyl-L-methionine-binding protein AF_0241">
    <location>
        <begin position="1"/>
        <end position="139"/>
    </location>
</feature>
<feature type="domain" description="TsaA-like" evidence="1">
    <location>
        <begin position="3"/>
        <end position="133"/>
    </location>
</feature>
<feature type="binding site" evidence="2 4">
    <location>
        <position position="16"/>
    </location>
    <ligand>
        <name>S-adenosyl-L-methionine</name>
        <dbReference type="ChEBI" id="CHEBI:59789"/>
    </ligand>
</feature>
<feature type="binding site" evidence="2 4">
    <location>
        <begin position="20"/>
        <end position="22"/>
    </location>
    <ligand>
        <name>S-adenosyl-L-methionine</name>
        <dbReference type="ChEBI" id="CHEBI:59789"/>
    </ligand>
</feature>
<feature type="binding site" evidence="2 4">
    <location>
        <begin position="58"/>
        <end position="59"/>
    </location>
    <ligand>
        <name>S-adenosyl-L-methionine</name>
        <dbReference type="ChEBI" id="CHEBI:59789"/>
    </ligand>
</feature>
<feature type="binding site" evidence="2 4">
    <location>
        <position position="82"/>
    </location>
    <ligand>
        <name>S-adenosyl-L-methionine</name>
        <dbReference type="ChEBI" id="CHEBI:59789"/>
    </ligand>
</feature>
<feature type="binding site" evidence="2 4">
    <location>
        <position position="92"/>
    </location>
    <ligand>
        <name>S-adenosyl-L-methionine</name>
        <dbReference type="ChEBI" id="CHEBI:59789"/>
    </ligand>
</feature>
<feature type="binding site" evidence="2 4">
    <location>
        <begin position="113"/>
        <end position="116"/>
    </location>
    <ligand>
        <name>S-adenosyl-L-methionine</name>
        <dbReference type="ChEBI" id="CHEBI:59789"/>
    </ligand>
</feature>
<feature type="strand" evidence="5">
    <location>
        <begin position="7"/>
        <end position="10"/>
    </location>
</feature>
<feature type="turn" evidence="5">
    <location>
        <begin position="16"/>
        <end position="18"/>
    </location>
</feature>
<feature type="helix" evidence="5">
    <location>
        <begin position="23"/>
        <end position="25"/>
    </location>
</feature>
<feature type="strand" evidence="5">
    <location>
        <begin position="29"/>
        <end position="34"/>
    </location>
</feature>
<feature type="helix" evidence="5">
    <location>
        <begin position="36"/>
        <end position="39"/>
    </location>
</feature>
<feature type="helix" evidence="5">
    <location>
        <begin position="40"/>
        <end position="42"/>
    </location>
</feature>
<feature type="helix" evidence="5">
    <location>
        <begin position="45"/>
        <end position="47"/>
    </location>
</feature>
<feature type="strand" evidence="5">
    <location>
        <begin position="49"/>
        <end position="56"/>
    </location>
</feature>
<feature type="helix" evidence="5">
    <location>
        <begin position="78"/>
        <end position="80"/>
    </location>
</feature>
<feature type="strand" evidence="5">
    <location>
        <begin position="86"/>
        <end position="88"/>
    </location>
</feature>
<feature type="strand" evidence="5">
    <location>
        <begin position="90"/>
        <end position="101"/>
    </location>
</feature>
<feature type="strand" evidence="5">
    <location>
        <begin position="104"/>
        <end position="109"/>
    </location>
</feature>
<feature type="strand" evidence="5">
    <location>
        <begin position="117"/>
        <end position="123"/>
    </location>
</feature>
<feature type="helix" evidence="5">
    <location>
        <begin position="126"/>
        <end position="129"/>
    </location>
</feature>
<comment type="subunit">
    <text evidence="2">Homodimer.</text>
</comment>
<comment type="similarity">
    <text evidence="3">Belongs to the tRNA methyltransferase O family.</text>
</comment>
<organism>
    <name type="scientific">Archaeoglobus fulgidus (strain ATCC 49558 / DSM 4304 / JCM 9628 / NBRC 100126 / VC-16)</name>
    <dbReference type="NCBI Taxonomy" id="224325"/>
    <lineage>
        <taxon>Archaea</taxon>
        <taxon>Methanobacteriati</taxon>
        <taxon>Methanobacteriota</taxon>
        <taxon>Archaeoglobi</taxon>
        <taxon>Archaeoglobales</taxon>
        <taxon>Archaeoglobaceae</taxon>
        <taxon>Archaeoglobus</taxon>
    </lineage>
</organism>
<sequence length="139" mass="15809">MILKPIGVVKSPFKTQNDAPRQGRFSDAVSEIAIFDEYADGLHKIENLRHIIVLYWMDKASRDKLRVVPPGETEERGVFTTRSPSRPNPIGLCVVEILEVERNRLKVRWLDALDGSPVIDIKKYSPEIDCVNQLEGQQP</sequence>
<accession>O29998</accession>
<dbReference type="EMBL" id="AE000782">
    <property type="protein sequence ID" value="AAB90992.1"/>
    <property type="molecule type" value="Genomic_DNA"/>
</dbReference>
<dbReference type="PIR" id="A69280">
    <property type="entry name" value="A69280"/>
</dbReference>
<dbReference type="PDB" id="2NV4">
    <property type="method" value="X-ray"/>
    <property type="resolution" value="2.20 A"/>
    <property type="chains" value="A/B=1-139"/>
</dbReference>
<dbReference type="PDBsum" id="2NV4"/>
<dbReference type="SMR" id="O29998"/>
<dbReference type="STRING" id="224325.AF_0241"/>
<dbReference type="PaxDb" id="224325-AF_0241"/>
<dbReference type="EnsemblBacteria" id="AAB90992">
    <property type="protein sequence ID" value="AAB90992"/>
    <property type="gene ID" value="AF_0241"/>
</dbReference>
<dbReference type="KEGG" id="afu:AF_0241"/>
<dbReference type="eggNOG" id="arCOG00761">
    <property type="taxonomic scope" value="Archaea"/>
</dbReference>
<dbReference type="HOGENOM" id="CLU_013458_2_0_2"/>
<dbReference type="OrthoDB" id="49886at2157"/>
<dbReference type="PhylomeDB" id="O29998"/>
<dbReference type="EvolutionaryTrace" id="O29998"/>
<dbReference type="Proteomes" id="UP000002199">
    <property type="component" value="Chromosome"/>
</dbReference>
<dbReference type="CDD" id="cd09281">
    <property type="entry name" value="UPF0066"/>
    <property type="match status" value="1"/>
</dbReference>
<dbReference type="Gene3D" id="2.40.30.70">
    <property type="entry name" value="YaeB-like"/>
    <property type="match status" value="1"/>
</dbReference>
<dbReference type="InterPro" id="IPR023370">
    <property type="entry name" value="TrmO-like_N"/>
</dbReference>
<dbReference type="InterPro" id="IPR023368">
    <property type="entry name" value="UPF0066_cons_site"/>
</dbReference>
<dbReference type="InterPro" id="IPR040372">
    <property type="entry name" value="YaeB-like"/>
</dbReference>
<dbReference type="InterPro" id="IPR036413">
    <property type="entry name" value="YaeB-like_sf"/>
</dbReference>
<dbReference type="InterPro" id="IPR036414">
    <property type="entry name" value="YaeB_N_sf"/>
</dbReference>
<dbReference type="NCBIfam" id="TIGR00104">
    <property type="entry name" value="tRNA_TsaA"/>
    <property type="match status" value="1"/>
</dbReference>
<dbReference type="PANTHER" id="PTHR12818">
    <property type="entry name" value="TRNA (ADENINE(37)-N6)-METHYLTRANSFERASE"/>
    <property type="match status" value="1"/>
</dbReference>
<dbReference type="PANTHER" id="PTHR12818:SF0">
    <property type="entry name" value="TRNA (ADENINE(37)-N6)-METHYLTRANSFERASE"/>
    <property type="match status" value="1"/>
</dbReference>
<dbReference type="Pfam" id="PF01980">
    <property type="entry name" value="TrmO_N"/>
    <property type="match status" value="1"/>
</dbReference>
<dbReference type="SUPFAM" id="SSF118196">
    <property type="entry name" value="YaeB-like"/>
    <property type="match status" value="1"/>
</dbReference>
<dbReference type="PROSITE" id="PS01318">
    <property type="entry name" value="TSAA_1"/>
    <property type="match status" value="1"/>
</dbReference>
<dbReference type="PROSITE" id="PS51668">
    <property type="entry name" value="TSAA_2"/>
    <property type="match status" value="1"/>
</dbReference>
<proteinExistence type="evidence at protein level"/>
<evidence type="ECO:0000255" key="1">
    <source>
        <dbReference type="PROSITE-ProRule" id="PRU01003"/>
    </source>
</evidence>
<evidence type="ECO:0000269" key="2">
    <source>
    </source>
</evidence>
<evidence type="ECO:0000305" key="3"/>
<evidence type="ECO:0007744" key="4">
    <source>
        <dbReference type="PDB" id="2NV4"/>
    </source>
</evidence>
<evidence type="ECO:0007829" key="5">
    <source>
        <dbReference type="PDB" id="2NV4"/>
    </source>
</evidence>
<gene>
    <name type="ordered locus">AF_0241</name>
</gene>
<keyword id="KW-0002">3D-structure</keyword>
<keyword id="KW-1185">Reference proteome</keyword>
<keyword id="KW-0949">S-adenosyl-L-methionine</keyword>
<protein>
    <recommendedName>
        <fullName>S-adenosyl-L-methionine-binding protein AF_0241</fullName>
    </recommendedName>
</protein>